<proteinExistence type="evidence at transcript level"/>
<sequence length="279" mass="31269">MSTIGSFDGFQPVSLKQEEEDQPSENDHLSTKEGNSGKDPGSRRISRQQSITKATLYPNPYRQPYVSRKYFVTRPGAIETAVEDLKGHIAQTSGETVQGFWLLTEIDHWNNEKEKILLLTDKTLLICKYDFIMLSCVQVQQVPLNAICCICLGKFVFPGMSLDKRPGDGLRIFWGSTEGWSLLSRWNPWSTEVPYATFTEHPMKQTSEKFLEICKLSEFTSKLVPAIENAHKNSAGSGSGKELVVLTQPILIETYTGLMSFIGNRNKLGYSLARGSIGF</sequence>
<gene>
    <name evidence="7" type="primary">Tprg1</name>
    <name evidence="1" type="synonym">Fam79b</name>
    <name evidence="5" type="synonym">Tprg</name>
</gene>
<keyword id="KW-0963">Cytoplasm</keyword>
<keyword id="KW-1185">Reference proteome</keyword>
<reference key="1">
    <citation type="journal article" date="2005" name="Science">
        <title>The transcriptional landscape of the mammalian genome.</title>
        <authorList>
            <person name="Carninci P."/>
            <person name="Kasukawa T."/>
            <person name="Katayama S."/>
            <person name="Gough J."/>
            <person name="Frith M.C."/>
            <person name="Maeda N."/>
            <person name="Oyama R."/>
            <person name="Ravasi T."/>
            <person name="Lenhard B."/>
            <person name="Wells C."/>
            <person name="Kodzius R."/>
            <person name="Shimokawa K."/>
            <person name="Bajic V.B."/>
            <person name="Brenner S.E."/>
            <person name="Batalov S."/>
            <person name="Forrest A.R."/>
            <person name="Zavolan M."/>
            <person name="Davis M.J."/>
            <person name="Wilming L.G."/>
            <person name="Aidinis V."/>
            <person name="Allen J.E."/>
            <person name="Ambesi-Impiombato A."/>
            <person name="Apweiler R."/>
            <person name="Aturaliya R.N."/>
            <person name="Bailey T.L."/>
            <person name="Bansal M."/>
            <person name="Baxter L."/>
            <person name="Beisel K.W."/>
            <person name="Bersano T."/>
            <person name="Bono H."/>
            <person name="Chalk A.M."/>
            <person name="Chiu K.P."/>
            <person name="Choudhary V."/>
            <person name="Christoffels A."/>
            <person name="Clutterbuck D.R."/>
            <person name="Crowe M.L."/>
            <person name="Dalla E."/>
            <person name="Dalrymple B.P."/>
            <person name="de Bono B."/>
            <person name="Della Gatta G."/>
            <person name="di Bernardo D."/>
            <person name="Down T."/>
            <person name="Engstrom P."/>
            <person name="Fagiolini M."/>
            <person name="Faulkner G."/>
            <person name="Fletcher C.F."/>
            <person name="Fukushima T."/>
            <person name="Furuno M."/>
            <person name="Futaki S."/>
            <person name="Gariboldi M."/>
            <person name="Georgii-Hemming P."/>
            <person name="Gingeras T.R."/>
            <person name="Gojobori T."/>
            <person name="Green R.E."/>
            <person name="Gustincich S."/>
            <person name="Harbers M."/>
            <person name="Hayashi Y."/>
            <person name="Hensch T.K."/>
            <person name="Hirokawa N."/>
            <person name="Hill D."/>
            <person name="Huminiecki L."/>
            <person name="Iacono M."/>
            <person name="Ikeo K."/>
            <person name="Iwama A."/>
            <person name="Ishikawa T."/>
            <person name="Jakt M."/>
            <person name="Kanapin A."/>
            <person name="Katoh M."/>
            <person name="Kawasawa Y."/>
            <person name="Kelso J."/>
            <person name="Kitamura H."/>
            <person name="Kitano H."/>
            <person name="Kollias G."/>
            <person name="Krishnan S.P."/>
            <person name="Kruger A."/>
            <person name="Kummerfeld S.K."/>
            <person name="Kurochkin I.V."/>
            <person name="Lareau L.F."/>
            <person name="Lazarevic D."/>
            <person name="Lipovich L."/>
            <person name="Liu J."/>
            <person name="Liuni S."/>
            <person name="McWilliam S."/>
            <person name="Madan Babu M."/>
            <person name="Madera M."/>
            <person name="Marchionni L."/>
            <person name="Matsuda H."/>
            <person name="Matsuzawa S."/>
            <person name="Miki H."/>
            <person name="Mignone F."/>
            <person name="Miyake S."/>
            <person name="Morris K."/>
            <person name="Mottagui-Tabar S."/>
            <person name="Mulder N."/>
            <person name="Nakano N."/>
            <person name="Nakauchi H."/>
            <person name="Ng P."/>
            <person name="Nilsson R."/>
            <person name="Nishiguchi S."/>
            <person name="Nishikawa S."/>
            <person name="Nori F."/>
            <person name="Ohara O."/>
            <person name="Okazaki Y."/>
            <person name="Orlando V."/>
            <person name="Pang K.C."/>
            <person name="Pavan W.J."/>
            <person name="Pavesi G."/>
            <person name="Pesole G."/>
            <person name="Petrovsky N."/>
            <person name="Piazza S."/>
            <person name="Reed J."/>
            <person name="Reid J.F."/>
            <person name="Ring B.Z."/>
            <person name="Ringwald M."/>
            <person name="Rost B."/>
            <person name="Ruan Y."/>
            <person name="Salzberg S.L."/>
            <person name="Sandelin A."/>
            <person name="Schneider C."/>
            <person name="Schoenbach C."/>
            <person name="Sekiguchi K."/>
            <person name="Semple C.A."/>
            <person name="Seno S."/>
            <person name="Sessa L."/>
            <person name="Sheng Y."/>
            <person name="Shibata Y."/>
            <person name="Shimada H."/>
            <person name="Shimada K."/>
            <person name="Silva D."/>
            <person name="Sinclair B."/>
            <person name="Sperling S."/>
            <person name="Stupka E."/>
            <person name="Sugiura K."/>
            <person name="Sultana R."/>
            <person name="Takenaka Y."/>
            <person name="Taki K."/>
            <person name="Tammoja K."/>
            <person name="Tan S.L."/>
            <person name="Tang S."/>
            <person name="Taylor M.S."/>
            <person name="Tegner J."/>
            <person name="Teichmann S.A."/>
            <person name="Ueda H.R."/>
            <person name="van Nimwegen E."/>
            <person name="Verardo R."/>
            <person name="Wei C.L."/>
            <person name="Yagi K."/>
            <person name="Yamanishi H."/>
            <person name="Zabarovsky E."/>
            <person name="Zhu S."/>
            <person name="Zimmer A."/>
            <person name="Hide W."/>
            <person name="Bult C."/>
            <person name="Grimmond S.M."/>
            <person name="Teasdale R.D."/>
            <person name="Liu E.T."/>
            <person name="Brusic V."/>
            <person name="Quackenbush J."/>
            <person name="Wahlestedt C."/>
            <person name="Mattick J.S."/>
            <person name="Hume D.A."/>
            <person name="Kai C."/>
            <person name="Sasaki D."/>
            <person name="Tomaru Y."/>
            <person name="Fukuda S."/>
            <person name="Kanamori-Katayama M."/>
            <person name="Suzuki M."/>
            <person name="Aoki J."/>
            <person name="Arakawa T."/>
            <person name="Iida J."/>
            <person name="Imamura K."/>
            <person name="Itoh M."/>
            <person name="Kato T."/>
            <person name="Kawaji H."/>
            <person name="Kawagashira N."/>
            <person name="Kawashima T."/>
            <person name="Kojima M."/>
            <person name="Kondo S."/>
            <person name="Konno H."/>
            <person name="Nakano K."/>
            <person name="Ninomiya N."/>
            <person name="Nishio T."/>
            <person name="Okada M."/>
            <person name="Plessy C."/>
            <person name="Shibata K."/>
            <person name="Shiraki T."/>
            <person name="Suzuki S."/>
            <person name="Tagami M."/>
            <person name="Waki K."/>
            <person name="Watahiki A."/>
            <person name="Okamura-Oho Y."/>
            <person name="Suzuki H."/>
            <person name="Kawai J."/>
            <person name="Hayashizaki Y."/>
        </authorList>
    </citation>
    <scope>NUCLEOTIDE SEQUENCE [LARGE SCALE MRNA]</scope>
    <source>
        <strain>C57BL/6J</strain>
        <tissue>Vagina</tissue>
    </source>
</reference>
<reference key="2">
    <citation type="journal article" date="2008" name="J. Invest. Dermatol.">
        <title>Tprg, a gene predominantly expressed in skin, is a direct target of the transcription factor p63.</title>
        <authorList>
            <person name="Antonini D."/>
            <person name="Dentice M."/>
            <person name="Mahtani P."/>
            <person name="De Rosa L."/>
            <person name="Della Gatta G."/>
            <person name="Mandinova A."/>
            <person name="Salvatore D."/>
            <person name="Stupka E."/>
            <person name="Missero C."/>
        </authorList>
    </citation>
    <scope>SUBCELLULAR LOCATION</scope>
    <scope>TISSUE SPECIFICITY</scope>
    <scope>DEVELOPMENTAL STAGE</scope>
</reference>
<evidence type="ECO:0000250" key="1">
    <source>
        <dbReference type="UniProtKB" id="Q6ZUI0"/>
    </source>
</evidence>
<evidence type="ECO:0000255" key="2">
    <source>
        <dbReference type="PROSITE-ProRule" id="PRU01127"/>
    </source>
</evidence>
<evidence type="ECO:0000256" key="3">
    <source>
        <dbReference type="SAM" id="MobiDB-lite"/>
    </source>
</evidence>
<evidence type="ECO:0000269" key="4">
    <source>
    </source>
</evidence>
<evidence type="ECO:0000303" key="5">
    <source>
    </source>
</evidence>
<evidence type="ECO:0000305" key="6"/>
<evidence type="ECO:0000312" key="7">
    <source>
        <dbReference type="MGI" id="MGI:1918588"/>
    </source>
</evidence>
<accession>Q8CB49</accession>
<protein>
    <recommendedName>
        <fullName evidence="6">Tumor protein p63-regulated gene 1 protein</fullName>
    </recommendedName>
    <alternativeName>
        <fullName evidence="1">Protein FAM79B</fullName>
    </alternativeName>
</protein>
<feature type="chain" id="PRO_0000268826" description="Tumor protein p63-regulated gene 1 protein">
    <location>
        <begin position="1"/>
        <end position="279"/>
    </location>
</feature>
<feature type="domain" description="hSac2" evidence="2">
    <location>
        <begin position="72"/>
        <end position="259"/>
    </location>
</feature>
<feature type="region of interest" description="Disordered" evidence="3">
    <location>
        <begin position="1"/>
        <end position="49"/>
    </location>
</feature>
<dbReference type="EMBL" id="AK036796">
    <property type="protein sequence ID" value="BAC29579.1"/>
    <property type="molecule type" value="mRNA"/>
</dbReference>
<dbReference type="CCDS" id="CCDS28084.1"/>
<dbReference type="RefSeq" id="NP_780374.1">
    <property type="nucleotide sequence ID" value="NM_175165.3"/>
</dbReference>
<dbReference type="RefSeq" id="XP_006522644.1">
    <property type="nucleotide sequence ID" value="XM_006522581.2"/>
</dbReference>
<dbReference type="FunCoup" id="Q8CB49">
    <property type="interactions" value="378"/>
</dbReference>
<dbReference type="STRING" id="10090.ENSMUSP00000052585"/>
<dbReference type="PhosphoSitePlus" id="Q8CB49"/>
<dbReference type="PaxDb" id="10090-ENSMUSP00000052585"/>
<dbReference type="ProteomicsDB" id="259070"/>
<dbReference type="Antibodypedia" id="46848">
    <property type="antibodies" value="39 antibodies from 11 providers"/>
</dbReference>
<dbReference type="Ensembl" id="ENSMUST00000056087.4">
    <property type="protein sequence ID" value="ENSMUSP00000052585.4"/>
    <property type="gene ID" value="ENSMUSG00000048399.5"/>
</dbReference>
<dbReference type="GeneID" id="71338"/>
<dbReference type="KEGG" id="mmu:71338"/>
<dbReference type="UCSC" id="uc007yum.1">
    <property type="organism name" value="mouse"/>
</dbReference>
<dbReference type="AGR" id="MGI:1918588"/>
<dbReference type="CTD" id="285386"/>
<dbReference type="MGI" id="MGI:1918588">
    <property type="gene designation" value="Tprg1"/>
</dbReference>
<dbReference type="VEuPathDB" id="HostDB:ENSMUSG00000048399"/>
<dbReference type="eggNOG" id="ENOG502QSYP">
    <property type="taxonomic scope" value="Eukaryota"/>
</dbReference>
<dbReference type="GeneTree" id="ENSGT00390000001652"/>
<dbReference type="HOGENOM" id="CLU_066718_0_0_1"/>
<dbReference type="InParanoid" id="Q8CB49"/>
<dbReference type="OMA" id="FIMLNCE"/>
<dbReference type="OrthoDB" id="10012704at2759"/>
<dbReference type="PhylomeDB" id="Q8CB49"/>
<dbReference type="TreeFam" id="TF333472"/>
<dbReference type="BioGRID-ORCS" id="71338">
    <property type="hits" value="3 hits in 76 CRISPR screens"/>
</dbReference>
<dbReference type="ChiTaRS" id="Tprg">
    <property type="organism name" value="mouse"/>
</dbReference>
<dbReference type="PRO" id="PR:Q8CB49"/>
<dbReference type="Proteomes" id="UP000000589">
    <property type="component" value="Chromosome 16"/>
</dbReference>
<dbReference type="RNAct" id="Q8CB49">
    <property type="molecule type" value="protein"/>
</dbReference>
<dbReference type="Bgee" id="ENSMUSG00000048399">
    <property type="expression patterns" value="Expressed in esophagus and 25 other cell types or tissues"/>
</dbReference>
<dbReference type="GO" id="GO:0005737">
    <property type="term" value="C:cytoplasm"/>
    <property type="evidence" value="ECO:0000314"/>
    <property type="project" value="MGI"/>
</dbReference>
<dbReference type="InterPro" id="IPR034753">
    <property type="entry name" value="hSac2"/>
</dbReference>
<dbReference type="InterPro" id="IPR022158">
    <property type="entry name" value="Inositol_phosphatase"/>
</dbReference>
<dbReference type="InterPro" id="IPR040242">
    <property type="entry name" value="TPRG1-like"/>
</dbReference>
<dbReference type="PANTHER" id="PTHR31108:SF6">
    <property type="entry name" value="TUMOR PROTEIN P63-REGULATED GENE 1 PROTEIN"/>
    <property type="match status" value="1"/>
</dbReference>
<dbReference type="PANTHER" id="PTHR31108">
    <property type="entry name" value="TUMOR PROTEIN P63-REGULATED GENE 1-LIKE PROTEIN"/>
    <property type="match status" value="1"/>
</dbReference>
<dbReference type="Pfam" id="PF12456">
    <property type="entry name" value="hSac2"/>
    <property type="match status" value="1"/>
</dbReference>
<dbReference type="PROSITE" id="PS51791">
    <property type="entry name" value="HSAC2"/>
    <property type="match status" value="1"/>
</dbReference>
<comment type="subcellular location">
    <subcellularLocation>
        <location evidence="4">Cytoplasm</location>
    </subcellularLocation>
</comment>
<comment type="tissue specificity">
    <text evidence="4">Highly expressed in skin. Also detected at low levels in tongue and esophagus.</text>
</comment>
<comment type="developmental stage">
    <text>Detected from embryonic stage 15.5 onwards. At stage 17.5 dpc, detected in epidermis and developing hair follicles. Expression levels in skin increase 4 days after birth and are mainly restricted to differentiated layers of the epidermis.</text>
</comment>
<comment type="similarity">
    <text evidence="6">Belongs to the TPRG1 family.</text>
</comment>
<organism>
    <name type="scientific">Mus musculus</name>
    <name type="common">Mouse</name>
    <dbReference type="NCBI Taxonomy" id="10090"/>
    <lineage>
        <taxon>Eukaryota</taxon>
        <taxon>Metazoa</taxon>
        <taxon>Chordata</taxon>
        <taxon>Craniata</taxon>
        <taxon>Vertebrata</taxon>
        <taxon>Euteleostomi</taxon>
        <taxon>Mammalia</taxon>
        <taxon>Eutheria</taxon>
        <taxon>Euarchontoglires</taxon>
        <taxon>Glires</taxon>
        <taxon>Rodentia</taxon>
        <taxon>Myomorpha</taxon>
        <taxon>Muroidea</taxon>
        <taxon>Muridae</taxon>
        <taxon>Murinae</taxon>
        <taxon>Mus</taxon>
        <taxon>Mus</taxon>
    </lineage>
</organism>
<name>TPRG1_MOUSE</name>